<geneLocation type="chloroplast"/>
<evidence type="ECO:0000250" key="1"/>
<evidence type="ECO:0000255" key="2">
    <source>
        <dbReference type="HAMAP-Rule" id="MF_00610"/>
    </source>
</evidence>
<protein>
    <recommendedName>
        <fullName evidence="2">Cytochrome f</fullName>
    </recommendedName>
</protein>
<organism>
    <name type="scientific">Cyanidioschyzon merolae (strain NIES-3377 / 10D)</name>
    <name type="common">Unicellular red alga</name>
    <dbReference type="NCBI Taxonomy" id="280699"/>
    <lineage>
        <taxon>Eukaryota</taxon>
        <taxon>Rhodophyta</taxon>
        <taxon>Bangiophyceae</taxon>
        <taxon>Cyanidiales</taxon>
        <taxon>Cyanidiaceae</taxon>
        <taxon>Cyanidioschyzon</taxon>
    </lineage>
</organism>
<proteinExistence type="inferred from homology"/>
<keyword id="KW-0150">Chloroplast</keyword>
<keyword id="KW-0249">Electron transport</keyword>
<keyword id="KW-0349">Heme</keyword>
<keyword id="KW-0408">Iron</keyword>
<keyword id="KW-0472">Membrane</keyword>
<keyword id="KW-0479">Metal-binding</keyword>
<keyword id="KW-0602">Photosynthesis</keyword>
<keyword id="KW-0934">Plastid</keyword>
<keyword id="KW-1185">Reference proteome</keyword>
<keyword id="KW-0732">Signal</keyword>
<keyword id="KW-0793">Thylakoid</keyword>
<keyword id="KW-0812">Transmembrane</keyword>
<keyword id="KW-1133">Transmembrane helix</keyword>
<keyword id="KW-0813">Transport</keyword>
<sequence>MMTYLSKQFSKLLFGQLLFLFIGNLLLKPVQAYPIYAQQAYANPREVTGRIVCANCHLAQKAIELEVPNSVLPNQEFEATVKIDYDLNQKQLLGNGQKGGLNVGAVLILPEGFRLSPNSRSPFFNTYSEQLPNVIVIGPVPGEKYREIHFPLKAPDPTTNKQVHFVKYSIYAGGNRGRGQLYPNGQKSNNAPVLASVNGVIEQIRENEVVIKTDQGDLVSQAIPAGHTLLVKQGQKIQNEQPLTMDPNVGGFGQAEKEIVLQNPTRLKTFIAFCVTVFIGQLAFVLKKKQVERVQASEMN</sequence>
<accession>Q85FX0</accession>
<comment type="function">
    <text evidence="2">Component of the cytochrome b6-f complex, which mediates electron transfer between photosystem II (PSII) and photosystem I (PSI), cyclic electron flow around PSI, and state transitions.</text>
</comment>
<comment type="cofactor">
    <cofactor evidence="2">
        <name>heme</name>
        <dbReference type="ChEBI" id="CHEBI:30413"/>
    </cofactor>
    <text evidence="2">Binds 1 heme group covalently.</text>
</comment>
<comment type="subunit">
    <text evidence="1">The 4 large subunits of the cytochrome b6-f complex are cytochrome b6, subunit IV (17 kDa polypeptide, petD), cytochrome f and the Rieske protein, while the 4 small subunits are PetG, PetL, PetM and PetN. The complex functions as a dimer (By similarity).</text>
</comment>
<comment type="subcellular location">
    <subcellularLocation>
        <location evidence="2">Plastid</location>
        <location evidence="2">Chloroplast thylakoid membrane</location>
        <topology evidence="2">Single-pass membrane protein</topology>
    </subcellularLocation>
</comment>
<comment type="similarity">
    <text evidence="2">Belongs to the cytochrome f family.</text>
</comment>
<feature type="signal peptide" evidence="2">
    <location>
        <begin position="1"/>
        <end position="32"/>
    </location>
</feature>
<feature type="chain" id="PRO_0000342084" description="Cytochrome f">
    <location>
        <begin position="33"/>
        <end position="300"/>
    </location>
</feature>
<feature type="transmembrane region" description="Helical" evidence="2">
    <location>
        <begin position="267"/>
        <end position="287"/>
    </location>
</feature>
<feature type="binding site" description="axial binding residue" evidence="2">
    <location>
        <position position="33"/>
    </location>
    <ligand>
        <name>heme</name>
        <dbReference type="ChEBI" id="CHEBI:30413"/>
    </ligand>
    <ligandPart>
        <name>Fe</name>
        <dbReference type="ChEBI" id="CHEBI:18248"/>
    </ligandPart>
</feature>
<feature type="binding site" description="covalent" evidence="2">
    <location>
        <position position="53"/>
    </location>
    <ligand>
        <name>heme</name>
        <dbReference type="ChEBI" id="CHEBI:30413"/>
    </ligand>
</feature>
<feature type="binding site" description="covalent" evidence="2">
    <location>
        <position position="56"/>
    </location>
    <ligand>
        <name>heme</name>
        <dbReference type="ChEBI" id="CHEBI:30413"/>
    </ligand>
</feature>
<feature type="binding site" description="axial binding residue" evidence="2">
    <location>
        <position position="57"/>
    </location>
    <ligand>
        <name>heme</name>
        <dbReference type="ChEBI" id="CHEBI:30413"/>
    </ligand>
    <ligandPart>
        <name>Fe</name>
        <dbReference type="ChEBI" id="CHEBI:18248"/>
    </ligandPart>
</feature>
<reference key="1">
    <citation type="journal article" date="2003" name="DNA Res.">
        <title>Complete sequence and analysis of the plastid genome of the unicellular red alga Cyanidioschyzon merolae.</title>
        <authorList>
            <person name="Ohta N."/>
            <person name="Matsuzaki M."/>
            <person name="Misumi O."/>
            <person name="Miyagishima S.-Y."/>
            <person name="Nozaki H."/>
            <person name="Tanaka K."/>
            <person name="Shin-i T."/>
            <person name="Kohara Y."/>
            <person name="Kuroiwa T."/>
        </authorList>
    </citation>
    <scope>NUCLEOTIDE SEQUENCE [LARGE SCALE GENOMIC DNA]</scope>
    <source>
        <strain>NIES-3377 / 10D</strain>
    </source>
</reference>
<gene>
    <name evidence="2" type="primary">petA</name>
</gene>
<dbReference type="EMBL" id="AB002583">
    <property type="protein sequence ID" value="BAC76223.1"/>
    <property type="molecule type" value="Genomic_DNA"/>
</dbReference>
<dbReference type="RefSeq" id="NP_849061.1">
    <property type="nucleotide sequence ID" value="NC_004799.1"/>
</dbReference>
<dbReference type="SMR" id="Q85FX0"/>
<dbReference type="STRING" id="280699.Q85FX0"/>
<dbReference type="EnsemblPlants" id="CMV155CT">
    <property type="protein sequence ID" value="CMV155CT"/>
    <property type="gene ID" value="CMV155C"/>
</dbReference>
<dbReference type="GeneID" id="844925"/>
<dbReference type="Gramene" id="CMV155CT">
    <property type="protein sequence ID" value="CMV155CT"/>
    <property type="gene ID" value="CMV155C"/>
</dbReference>
<dbReference type="KEGG" id="cme:CymeCp129"/>
<dbReference type="eggNOG" id="ENOG502QPT8">
    <property type="taxonomic scope" value="Eukaryota"/>
</dbReference>
<dbReference type="HOGENOM" id="CLU_033498_0_0_1"/>
<dbReference type="Proteomes" id="UP000007014">
    <property type="component" value="Chloroplast"/>
</dbReference>
<dbReference type="GO" id="GO:0009535">
    <property type="term" value="C:chloroplast thylakoid membrane"/>
    <property type="evidence" value="ECO:0007669"/>
    <property type="project" value="UniProtKB-SubCell"/>
</dbReference>
<dbReference type="GO" id="GO:0009055">
    <property type="term" value="F:electron transfer activity"/>
    <property type="evidence" value="ECO:0007669"/>
    <property type="project" value="UniProtKB-UniRule"/>
</dbReference>
<dbReference type="GO" id="GO:0020037">
    <property type="term" value="F:heme binding"/>
    <property type="evidence" value="ECO:0007669"/>
    <property type="project" value="InterPro"/>
</dbReference>
<dbReference type="GO" id="GO:0005506">
    <property type="term" value="F:iron ion binding"/>
    <property type="evidence" value="ECO:0007669"/>
    <property type="project" value="InterPro"/>
</dbReference>
<dbReference type="GO" id="GO:0003729">
    <property type="term" value="F:mRNA binding"/>
    <property type="evidence" value="ECO:0007669"/>
    <property type="project" value="EnsemblPlants"/>
</dbReference>
<dbReference type="GO" id="GO:0015979">
    <property type="term" value="P:photosynthesis"/>
    <property type="evidence" value="ECO:0007669"/>
    <property type="project" value="UniProtKB-UniRule"/>
</dbReference>
<dbReference type="Gene3D" id="2.40.50.100">
    <property type="match status" value="1"/>
</dbReference>
<dbReference type="Gene3D" id="2.60.40.830">
    <property type="entry name" value="Cytochrome f large domain"/>
    <property type="match status" value="1"/>
</dbReference>
<dbReference type="Gene3D" id="1.20.5.700">
    <property type="entry name" value="Single helix bin"/>
    <property type="match status" value="1"/>
</dbReference>
<dbReference type="HAMAP" id="MF_00610">
    <property type="entry name" value="Cytb6_f_cytF"/>
    <property type="match status" value="1"/>
</dbReference>
<dbReference type="InterPro" id="IPR024058">
    <property type="entry name" value="Cyt-f_TM"/>
</dbReference>
<dbReference type="InterPro" id="IPR002325">
    <property type="entry name" value="Cyt_f"/>
</dbReference>
<dbReference type="InterPro" id="IPR024094">
    <property type="entry name" value="Cyt_f_lg_dom"/>
</dbReference>
<dbReference type="InterPro" id="IPR036826">
    <property type="entry name" value="Cyt_f_lg_dom_sf"/>
</dbReference>
<dbReference type="InterPro" id="IPR011054">
    <property type="entry name" value="Rudment_hybrid_motif"/>
</dbReference>
<dbReference type="PANTHER" id="PTHR33288">
    <property type="match status" value="1"/>
</dbReference>
<dbReference type="PANTHER" id="PTHR33288:SF10">
    <property type="entry name" value="CYTOCHROME F"/>
    <property type="match status" value="1"/>
</dbReference>
<dbReference type="Pfam" id="PF01333">
    <property type="entry name" value="Apocytochr_F_C"/>
    <property type="match status" value="1"/>
</dbReference>
<dbReference type="Pfam" id="PF16639">
    <property type="entry name" value="Apocytochr_F_N"/>
    <property type="match status" value="1"/>
</dbReference>
<dbReference type="PRINTS" id="PR00610">
    <property type="entry name" value="CYTOCHROMEF"/>
</dbReference>
<dbReference type="SUPFAM" id="SSF103431">
    <property type="entry name" value="Cytochrome f subunit of the cytochrome b6f complex, transmembrane anchor"/>
    <property type="match status" value="1"/>
</dbReference>
<dbReference type="SUPFAM" id="SSF49441">
    <property type="entry name" value="Cytochrome f, large domain"/>
    <property type="match status" value="1"/>
</dbReference>
<dbReference type="SUPFAM" id="SSF51246">
    <property type="entry name" value="Rudiment single hybrid motif"/>
    <property type="match status" value="1"/>
</dbReference>
<dbReference type="PROSITE" id="PS51010">
    <property type="entry name" value="CYTF"/>
    <property type="match status" value="1"/>
</dbReference>
<name>CYF_CYAM1</name>